<protein>
    <recommendedName>
        <fullName evidence="1">Malate dehydrogenase, mitochondrial</fullName>
        <ecNumber>1.1.1.37</ecNumber>
    </recommendedName>
</protein>
<accession>P86074</accession>
<comment type="catalytic activity">
    <reaction evidence="1 4">
        <text>(S)-malate + NAD(+) = oxaloacetate + NADH + H(+)</text>
        <dbReference type="Rhea" id="RHEA:21432"/>
        <dbReference type="ChEBI" id="CHEBI:15378"/>
        <dbReference type="ChEBI" id="CHEBI:15589"/>
        <dbReference type="ChEBI" id="CHEBI:16452"/>
        <dbReference type="ChEBI" id="CHEBI:57540"/>
        <dbReference type="ChEBI" id="CHEBI:57945"/>
        <dbReference type="EC" id="1.1.1.37"/>
    </reaction>
</comment>
<comment type="subunit">
    <text evidence="1">Homodimer.</text>
</comment>
<comment type="subcellular location">
    <subcellularLocation>
        <location evidence="1">Mitochondrion matrix</location>
    </subcellularLocation>
</comment>
<comment type="similarity">
    <text evidence="3">Belongs to the LDH/MDH superfamily. MDH type 1 family.</text>
</comment>
<organism>
    <name type="scientific">Capsicum annuum var. annuum</name>
    <name type="common">Red pepper</name>
    <dbReference type="NCBI Taxonomy" id="40321"/>
    <lineage>
        <taxon>Eukaryota</taxon>
        <taxon>Viridiplantae</taxon>
        <taxon>Streptophyta</taxon>
        <taxon>Embryophyta</taxon>
        <taxon>Tracheophyta</taxon>
        <taxon>Spermatophyta</taxon>
        <taxon>Magnoliopsida</taxon>
        <taxon>eudicotyledons</taxon>
        <taxon>Gunneridae</taxon>
        <taxon>Pentapetalae</taxon>
        <taxon>asterids</taxon>
        <taxon>lamiids</taxon>
        <taxon>Solanales</taxon>
        <taxon>Solanaceae</taxon>
        <taxon>Solanoideae</taxon>
        <taxon>Capsiceae</taxon>
        <taxon>Capsicum</taxon>
    </lineage>
</organism>
<keyword id="KW-0903">Direct protein sequencing</keyword>
<keyword id="KW-0496">Mitochondrion</keyword>
<keyword id="KW-0520">NAD</keyword>
<keyword id="KW-0560">Oxidoreductase</keyword>
<keyword id="KW-0816">Tricarboxylic acid cycle</keyword>
<sequence>DDLFNINAGIVKLFGVTTLDVVRTQDGGTEVVEAK</sequence>
<reference evidence="5" key="1">
    <citation type="submission" date="2008-07" db="UniProtKB">
        <authorList>
            <person name="Almagro L."/>
            <person name="Sabater Jara A.B."/>
            <person name="Pedreno M.A."/>
        </authorList>
    </citation>
    <scope>PROTEIN SEQUENCE</scope>
</reference>
<feature type="chain" id="PRO_0000362993" description="Malate dehydrogenase, mitochondrial">
    <location>
        <begin position="1" status="less than"/>
        <end position="35" status="greater than"/>
    </location>
</feature>
<feature type="binding site" evidence="2">
    <location>
        <position position="7"/>
    </location>
    <ligand>
        <name>NAD(+)</name>
        <dbReference type="ChEBI" id="CHEBI:57540"/>
    </ligand>
</feature>
<feature type="binding site" evidence="2 4">
    <location>
        <position position="23"/>
    </location>
    <ligand>
        <name>substrate</name>
    </ligand>
</feature>
<feature type="unsure residue" description="L or I">
    <location>
        <position position="3"/>
    </location>
</feature>
<feature type="unsure residue" description="F or M">
    <location>
        <position position="4"/>
    </location>
</feature>
<feature type="unsure residue" description="I or L">
    <location>
        <position position="6"/>
    </location>
</feature>
<feature type="unsure residue" description="I or L">
    <location>
        <position position="10"/>
    </location>
</feature>
<feature type="unsure residue" description="K or Q">
    <location>
        <position position="12"/>
    </location>
</feature>
<feature type="unsure residue" description="L or I">
    <location>
        <position position="13"/>
    </location>
</feature>
<feature type="unsure residue" description="F or M">
    <location>
        <position position="14"/>
    </location>
</feature>
<feature type="unsure residue" description="L or I">
    <location>
        <position position="19"/>
    </location>
</feature>
<feature type="unsure residue" description="Q or K">
    <location>
        <position position="25"/>
    </location>
</feature>
<feature type="unsure residue" description="K or Q">
    <location>
        <position position="35"/>
    </location>
</feature>
<feature type="non-consecutive residues" evidence="5">
    <location>
        <begin position="12"/>
        <end position="13"/>
    </location>
</feature>
<feature type="non-consecutive residues" evidence="5">
    <location>
        <begin position="23"/>
        <end position="24"/>
    </location>
</feature>
<feature type="non-terminal residue">
    <location>
        <position position="1"/>
    </location>
</feature>
<feature type="non-terminal residue">
    <location>
        <position position="35"/>
    </location>
</feature>
<evidence type="ECO:0000250" key="1">
    <source>
        <dbReference type="UniProtKB" id="P17783"/>
    </source>
</evidence>
<evidence type="ECO:0000250" key="2">
    <source>
        <dbReference type="UniProtKB" id="P61889"/>
    </source>
</evidence>
<evidence type="ECO:0000255" key="3"/>
<evidence type="ECO:0000255" key="4">
    <source>
        <dbReference type="PROSITE-ProRule" id="PRU10004"/>
    </source>
</evidence>
<evidence type="ECO:0000305" key="5"/>
<name>MDHM_CAPAA</name>
<dbReference type="EC" id="1.1.1.37"/>
<dbReference type="GO" id="GO:0005759">
    <property type="term" value="C:mitochondrial matrix"/>
    <property type="evidence" value="ECO:0007669"/>
    <property type="project" value="UniProtKB-SubCell"/>
</dbReference>
<dbReference type="GO" id="GO:0030060">
    <property type="term" value="F:L-malate dehydrogenase (NAD+) activity"/>
    <property type="evidence" value="ECO:0007669"/>
    <property type="project" value="UniProtKB-EC"/>
</dbReference>
<dbReference type="GO" id="GO:0006099">
    <property type="term" value="P:tricarboxylic acid cycle"/>
    <property type="evidence" value="ECO:0007669"/>
    <property type="project" value="UniProtKB-KW"/>
</dbReference>
<proteinExistence type="evidence at protein level"/>